<reference key="1">
    <citation type="journal article" date="1998" name="Nature">
        <title>Deciphering the biology of Mycobacterium tuberculosis from the complete genome sequence.</title>
        <authorList>
            <person name="Cole S.T."/>
            <person name="Brosch R."/>
            <person name="Parkhill J."/>
            <person name="Garnier T."/>
            <person name="Churcher C.M."/>
            <person name="Harris D.E."/>
            <person name="Gordon S.V."/>
            <person name="Eiglmeier K."/>
            <person name="Gas S."/>
            <person name="Barry C.E. III"/>
            <person name="Tekaia F."/>
            <person name="Badcock K."/>
            <person name="Basham D."/>
            <person name="Brown D."/>
            <person name="Chillingworth T."/>
            <person name="Connor R."/>
            <person name="Davies R.M."/>
            <person name="Devlin K."/>
            <person name="Feltwell T."/>
            <person name="Gentles S."/>
            <person name="Hamlin N."/>
            <person name="Holroyd S."/>
            <person name="Hornsby T."/>
            <person name="Jagels K."/>
            <person name="Krogh A."/>
            <person name="McLean J."/>
            <person name="Moule S."/>
            <person name="Murphy L.D."/>
            <person name="Oliver S."/>
            <person name="Osborne J."/>
            <person name="Quail M.A."/>
            <person name="Rajandream M.A."/>
            <person name="Rogers J."/>
            <person name="Rutter S."/>
            <person name="Seeger K."/>
            <person name="Skelton S."/>
            <person name="Squares S."/>
            <person name="Squares R."/>
            <person name="Sulston J.E."/>
            <person name="Taylor K."/>
            <person name="Whitehead S."/>
            <person name="Barrell B.G."/>
        </authorList>
    </citation>
    <scope>NUCLEOTIDE SEQUENCE [LARGE SCALE GENOMIC DNA]</scope>
    <source>
        <strain>ATCC 25618 / H37Rv</strain>
    </source>
</reference>
<reference key="2">
    <citation type="journal article" date="2004" name="Protein Expr. Purif.">
        <title>Cloning, overexpression, and characterization of a serine/threonine protein kinase pknI from Mycobacterium tuberculosis H37Rv.</title>
        <authorList>
            <person name="Gopalaswamy R."/>
            <person name="Narayanan P.R."/>
            <person name="Narayanan S."/>
        </authorList>
    </citation>
    <scope>CATALYTIC ACTIVITY</scope>
    <scope>COFACTOR</scope>
    <scope>AUTOPHOSPHORYLATION</scope>
    <source>
        <strain>ATCC 25618 / H37Rv</strain>
    </source>
</reference>
<reference key="3">
    <citation type="journal article" date="2006" name="Tuberculosis">
        <title>Protein kinase I of Mycobacterium tuberculosis: cellular localization and expression during infection of macrophage-like cells.</title>
        <authorList>
            <person name="Singh A."/>
            <person name="Singh Y."/>
            <person name="Pine R."/>
            <person name="Shi L."/>
            <person name="Chandra R."/>
            <person name="Drlica K."/>
        </authorList>
    </citation>
    <scope>CATALYTIC ACTIVITY</scope>
    <scope>SUBCELLULAR LOCATION</scope>
    <scope>INDUCTION</scope>
    <scope>AUTOPHOSPHORYLATION</scope>
    <source>
        <strain>ATCC 25618 / H37Rv</strain>
    </source>
</reference>
<reference key="4">
    <citation type="journal article" date="2009" name="FEMS Microbiol. Lett.">
        <title>The serine/threonine protein kinase PknI controls the growth of Mycobacterium tuberculosis upon infection.</title>
        <authorList>
            <person name="Gopalaswamy R."/>
            <person name="Narayanan S."/>
            <person name="Chen B."/>
            <person name="Jacobs W.R."/>
            <person name="Av-Gay Y."/>
        </authorList>
    </citation>
    <scope>FUNCTION IN VIRULENCE</scope>
    <scope>DISRUPTION PHENOTYPE</scope>
    <source>
        <strain>ATCC 25618 / H37Rv</strain>
    </source>
</reference>
<reference key="5">
    <citation type="journal article" date="2011" name="Mol. Cell. Proteomics">
        <title>Proteogenomic analysis of Mycobacterium tuberculosis by high resolution mass spectrometry.</title>
        <authorList>
            <person name="Kelkar D.S."/>
            <person name="Kumar D."/>
            <person name="Kumar P."/>
            <person name="Balakrishnan L."/>
            <person name="Muthusamy B."/>
            <person name="Yadav A.K."/>
            <person name="Shrivastava P."/>
            <person name="Marimuthu A."/>
            <person name="Anand S."/>
            <person name="Sundaram H."/>
            <person name="Kingsbury R."/>
            <person name="Harsha H.C."/>
            <person name="Nair B."/>
            <person name="Prasad T.S."/>
            <person name="Chauhan D.S."/>
            <person name="Katoch K."/>
            <person name="Katoch V.M."/>
            <person name="Kumar P."/>
            <person name="Chaerkady R."/>
            <person name="Ramachandran S."/>
            <person name="Dash D."/>
            <person name="Pandey A."/>
        </authorList>
    </citation>
    <scope>IDENTIFICATION BY MASS SPECTROMETRY [LARGE SCALE ANALYSIS]</scope>
    <source>
        <strain>ATCC 25618 / H37Rv</strain>
    </source>
</reference>
<reference key="6">
    <citation type="journal article" date="2015" name="J. Mol. Graph. Model.">
        <title>In silico and experimental validation of protein-protein interactions between PknI and Rv2159c from Mycobacterium tuberculosis.</title>
        <authorList>
            <person name="Venkatesan A."/>
            <person name="Hassan S."/>
            <person name="Palaniyandi K."/>
            <person name="Narayanan S."/>
        </authorList>
    </citation>
    <scope>INTERACTION WITH RV2159C AND RV0148</scope>
    <scope>MOLECULAR DYNAMICS SIMULATION</scope>
    <source>
        <strain>H37Rv</strain>
    </source>
</reference>
<reference key="7">
    <citation type="journal article" date="2016" name="Front. Microbiol.">
        <title>Functional characterization of PknI-Rv2159c interaction in redox homeostasis of Mycobacterium tuberculosis.</title>
        <authorList>
            <person name="Venkatesan A."/>
            <person name="Palaniyandi K."/>
            <person name="Sharma D."/>
            <person name="Bisht D."/>
            <person name="Narayanan S."/>
        </authorList>
    </citation>
    <scope>FUNCTION</scope>
    <scope>INTERACTION WITH RV2159C</scope>
    <source>
        <strain>H37Rv</strain>
    </source>
</reference>
<reference evidence="17 18 19" key="8">
    <citation type="journal article" date="2017" name="Structure">
        <title>Structural insight into the activation of PknI kinase from M.tuberculosis via dimerization of the extracellular sensor domain.</title>
        <authorList>
            <person name="Yan Q."/>
            <person name="Jiang D."/>
            <person name="Qian L."/>
            <person name="Zhang Q."/>
            <person name="Zhang W."/>
            <person name="Zhou W."/>
            <person name="Mi K."/>
            <person name="Guddat L."/>
            <person name="Yang H."/>
            <person name="Rao Z."/>
        </authorList>
    </citation>
    <scope>X-RAY CRYSTALLOGRAPHY (1.60 ANGSTROMS) OF 1-280 AND 372-585</scope>
    <scope>ACTIVITY REGULATION</scope>
    <scope>SUBUNIT</scope>
    <scope>AUTOPHOSPHORYLATION</scope>
    <scope>MUTAGENESIS OF ILE-413; PRO-430 AND PRO-431</scope>
</reference>
<reference evidence="13 14 15 16" key="9">
    <citation type="journal article" date="2017" name="FEBS J.">
        <title>The crystal structure of PknI from Mycobacterium tuberculosis shows an inactive, pseudokinase-like conformation.</title>
        <authorList>
            <person name="Lisa M.N."/>
            <person name="Wagner T."/>
            <person name="Alexandre M."/>
            <person name="Barilone N."/>
            <person name="Raynal B."/>
            <person name="Alzari P.M."/>
            <person name="Bellinzoni M."/>
        </authorList>
    </citation>
    <scope>X-RAY CRYSTALLOGRAPHY (2.00 ANGSTROMS) OF 1-256 OF WILD-TYPE IN COMPLEX WITH ADP AND MUTANTS</scope>
</reference>
<name>PKNI_MYCTU</name>
<sequence length="585" mass="61805">MALASGVTFAGYTVVRMLGCSAMGEVYLVQHPGFPGWQALKVLSPAMAADDEFRRRFQRETEVAARLFHPHILEVHDRGEFDGQLWIAMDYVDGIDATQHMADRFPAVLPVGEVLAIVTAVAGALDYAHQRGLLHRDVNPANVVLTSQSAGDQRILLADFGIASQPSYPAPELSAGADVDGRADQYALALTAIHLFAGAPPVDRSHTGPLQPPKLSAFRPDLARLDGVLSRALATAPADRFGSCREFADAMNEQAGVAIADQSSGGVDASEVTAAAGEEAYVVDYPAYGWPEAVDCKEPSARAPAPAAPTPQRRGSMLQSAAGVLARRLDNFSTATKAPASPTRRRPRRILVGAVAVLLLAGLFAVGIVIGRKTNTTATEVARPPTSGSAVPSAPTTTVAVTAPVPLDGTYRIEIQRSKQTYDYTPTPQPPDVNTWWAFRTSCTPTECLAAATMLDDNDHTQAKTPPVRPFLMQFGEGQWKSRPETVQFPCVGPNGSPSTQATTQLLALRPQPQGDLVGEMVVTVHSNECGQQGAVIRIPAVASRSGDLPPAVTVPDPATIPDTPDTTSTATLTPPTTTAPGPGR</sequence>
<evidence type="ECO:0000255" key="1"/>
<evidence type="ECO:0000255" key="2">
    <source>
        <dbReference type="PROSITE-ProRule" id="PRU00159"/>
    </source>
</evidence>
<evidence type="ECO:0000256" key="3">
    <source>
        <dbReference type="SAM" id="MobiDB-lite"/>
    </source>
</evidence>
<evidence type="ECO:0000269" key="4">
    <source>
    </source>
</evidence>
<evidence type="ECO:0000269" key="5">
    <source>
    </source>
</evidence>
<evidence type="ECO:0000269" key="6">
    <source>
    </source>
</evidence>
<evidence type="ECO:0000269" key="7">
    <source>
    </source>
</evidence>
<evidence type="ECO:0000269" key="8">
    <source>
    </source>
</evidence>
<evidence type="ECO:0000269" key="9">
    <source>
    </source>
</evidence>
<evidence type="ECO:0000269" key="10">
    <source>
    </source>
</evidence>
<evidence type="ECO:0000305" key="11"/>
<evidence type="ECO:0000305" key="12">
    <source>
    </source>
</evidence>
<evidence type="ECO:0007744" key="13">
    <source>
        <dbReference type="PDB" id="5M06"/>
    </source>
</evidence>
<evidence type="ECO:0007744" key="14">
    <source>
        <dbReference type="PDB" id="5M07"/>
    </source>
</evidence>
<evidence type="ECO:0007744" key="15">
    <source>
        <dbReference type="PDB" id="5M08"/>
    </source>
</evidence>
<evidence type="ECO:0007744" key="16">
    <source>
        <dbReference type="PDB" id="5M09"/>
    </source>
</evidence>
<evidence type="ECO:0007744" key="17">
    <source>
        <dbReference type="PDB" id="5XKA"/>
    </source>
</evidence>
<evidence type="ECO:0007744" key="18">
    <source>
        <dbReference type="PDB" id="5XLL"/>
    </source>
</evidence>
<evidence type="ECO:0007744" key="19">
    <source>
        <dbReference type="PDB" id="5XLM"/>
    </source>
</evidence>
<evidence type="ECO:0007829" key="20">
    <source>
        <dbReference type="PDB" id="5XKA"/>
    </source>
</evidence>
<evidence type="ECO:0007829" key="21">
    <source>
        <dbReference type="PDB" id="5XLL"/>
    </source>
</evidence>
<evidence type="ECO:0007829" key="22">
    <source>
        <dbReference type="PDB" id="5XLM"/>
    </source>
</evidence>
<organism>
    <name type="scientific">Mycobacterium tuberculosis (strain ATCC 25618 / H37Rv)</name>
    <dbReference type="NCBI Taxonomy" id="83332"/>
    <lineage>
        <taxon>Bacteria</taxon>
        <taxon>Bacillati</taxon>
        <taxon>Actinomycetota</taxon>
        <taxon>Actinomycetes</taxon>
        <taxon>Mycobacteriales</taxon>
        <taxon>Mycobacteriaceae</taxon>
        <taxon>Mycobacterium</taxon>
        <taxon>Mycobacterium tuberculosis complex</taxon>
    </lineage>
</organism>
<dbReference type="EC" id="2.7.11.1" evidence="4 5"/>
<dbReference type="EMBL" id="AL123456">
    <property type="protein sequence ID" value="CCP45716.1"/>
    <property type="molecule type" value="Genomic_DNA"/>
</dbReference>
<dbReference type="PIR" id="B70747">
    <property type="entry name" value="B70747"/>
</dbReference>
<dbReference type="RefSeq" id="NP_217430.1">
    <property type="nucleotide sequence ID" value="NC_000962.3"/>
</dbReference>
<dbReference type="RefSeq" id="WP_003900593.1">
    <property type="nucleotide sequence ID" value="NZ_NVQJ01000006.1"/>
</dbReference>
<dbReference type="PDB" id="5M06">
    <property type="method" value="X-ray"/>
    <property type="resolution" value="2.00 A"/>
    <property type="chains" value="A/B=1-256"/>
</dbReference>
<dbReference type="PDB" id="5M07">
    <property type="method" value="X-ray"/>
    <property type="resolution" value="2.50 A"/>
    <property type="chains" value="A/B=1-256"/>
</dbReference>
<dbReference type="PDB" id="5M08">
    <property type="method" value="X-ray"/>
    <property type="resolution" value="3.03 A"/>
    <property type="chains" value="A/B=1-256"/>
</dbReference>
<dbReference type="PDB" id="5M09">
    <property type="method" value="X-ray"/>
    <property type="resolution" value="2.98 A"/>
    <property type="chains" value="A/B=1-256"/>
</dbReference>
<dbReference type="PDB" id="5XKA">
    <property type="method" value="X-ray"/>
    <property type="resolution" value="1.60 A"/>
    <property type="chains" value="A/B=1-280"/>
</dbReference>
<dbReference type="PDB" id="5XLL">
    <property type="method" value="X-ray"/>
    <property type="resolution" value="2.20 A"/>
    <property type="chains" value="A/B=402-585"/>
</dbReference>
<dbReference type="PDB" id="5XLM">
    <property type="method" value="X-ray"/>
    <property type="resolution" value="2.20 A"/>
    <property type="chains" value="A/B=372-585"/>
</dbReference>
<dbReference type="PDBsum" id="5M06"/>
<dbReference type="PDBsum" id="5M07"/>
<dbReference type="PDBsum" id="5M08"/>
<dbReference type="PDBsum" id="5M09"/>
<dbReference type="PDBsum" id="5XKA"/>
<dbReference type="PDBsum" id="5XLL"/>
<dbReference type="PDBsum" id="5XLM"/>
<dbReference type="SMR" id="P9WI69"/>
<dbReference type="FunCoup" id="P9WI69">
    <property type="interactions" value="8"/>
</dbReference>
<dbReference type="STRING" id="83332.Rv2914c"/>
<dbReference type="PaxDb" id="83332-Rv2914c"/>
<dbReference type="GeneID" id="45426901"/>
<dbReference type="GeneID" id="887642"/>
<dbReference type="KEGG" id="mtu:Rv2914c"/>
<dbReference type="KEGG" id="mtv:RVBD_2914c"/>
<dbReference type="TubercuList" id="Rv2914c"/>
<dbReference type="eggNOG" id="COG0515">
    <property type="taxonomic scope" value="Bacteria"/>
</dbReference>
<dbReference type="InParanoid" id="P9WI69"/>
<dbReference type="OrthoDB" id="4702250at2"/>
<dbReference type="BRENDA" id="2.7.11.1">
    <property type="organism ID" value="3445"/>
</dbReference>
<dbReference type="Proteomes" id="UP000001584">
    <property type="component" value="Chromosome"/>
</dbReference>
<dbReference type="GO" id="GO:0005829">
    <property type="term" value="C:cytosol"/>
    <property type="evidence" value="ECO:0000314"/>
    <property type="project" value="MTBBASE"/>
</dbReference>
<dbReference type="GO" id="GO:0005886">
    <property type="term" value="C:plasma membrane"/>
    <property type="evidence" value="ECO:0007005"/>
    <property type="project" value="MTBBASE"/>
</dbReference>
<dbReference type="GO" id="GO:0005524">
    <property type="term" value="F:ATP binding"/>
    <property type="evidence" value="ECO:0007669"/>
    <property type="project" value="UniProtKB-KW"/>
</dbReference>
<dbReference type="GO" id="GO:0030145">
    <property type="term" value="F:manganese ion binding"/>
    <property type="evidence" value="ECO:0000314"/>
    <property type="project" value="MTBBASE"/>
</dbReference>
<dbReference type="GO" id="GO:0004672">
    <property type="term" value="F:protein kinase activity"/>
    <property type="evidence" value="ECO:0000314"/>
    <property type="project" value="MTBBASE"/>
</dbReference>
<dbReference type="GO" id="GO:0106310">
    <property type="term" value="F:protein serine kinase activity"/>
    <property type="evidence" value="ECO:0007669"/>
    <property type="project" value="RHEA"/>
</dbReference>
<dbReference type="GO" id="GO:0004674">
    <property type="term" value="F:protein serine/threonine kinase activity"/>
    <property type="evidence" value="ECO:0000318"/>
    <property type="project" value="GO_Central"/>
</dbReference>
<dbReference type="GO" id="GO:0040009">
    <property type="term" value="P:regulation of growth rate"/>
    <property type="evidence" value="ECO:0000314"/>
    <property type="project" value="MTBBASE"/>
</dbReference>
<dbReference type="CDD" id="cd14014">
    <property type="entry name" value="STKc_PknB_like"/>
    <property type="match status" value="1"/>
</dbReference>
<dbReference type="FunFam" id="3.30.200.20:FF:000035">
    <property type="entry name" value="Serine/threonine protein kinase Stk1"/>
    <property type="match status" value="1"/>
</dbReference>
<dbReference type="Gene3D" id="3.30.200.20">
    <property type="entry name" value="Phosphorylase Kinase, domain 1"/>
    <property type="match status" value="1"/>
</dbReference>
<dbReference type="Gene3D" id="1.10.510.10">
    <property type="entry name" value="Transferase(Phosphotransferase) domain 1"/>
    <property type="match status" value="1"/>
</dbReference>
<dbReference type="InterPro" id="IPR011009">
    <property type="entry name" value="Kinase-like_dom_sf"/>
</dbReference>
<dbReference type="InterPro" id="IPR000719">
    <property type="entry name" value="Prot_kinase_dom"/>
</dbReference>
<dbReference type="PANTHER" id="PTHR43289">
    <property type="entry name" value="MITOGEN-ACTIVATED PROTEIN KINASE KINASE KINASE 20-RELATED"/>
    <property type="match status" value="1"/>
</dbReference>
<dbReference type="PANTHER" id="PTHR43289:SF6">
    <property type="entry name" value="SERINE_THREONINE-PROTEIN KINASE NEKL-3"/>
    <property type="match status" value="1"/>
</dbReference>
<dbReference type="Pfam" id="PF00069">
    <property type="entry name" value="Pkinase"/>
    <property type="match status" value="1"/>
</dbReference>
<dbReference type="SUPFAM" id="SSF56112">
    <property type="entry name" value="Protein kinase-like (PK-like)"/>
    <property type="match status" value="1"/>
</dbReference>
<dbReference type="PROSITE" id="PS50011">
    <property type="entry name" value="PROTEIN_KINASE_DOM"/>
    <property type="match status" value="1"/>
</dbReference>
<feature type="chain" id="PRO_0000171220" description="Serine/threonine-protein kinase PknI">
    <location>
        <begin position="1"/>
        <end position="585"/>
    </location>
</feature>
<feature type="topological domain" description="Cytoplasmic" evidence="12">
    <location>
        <begin position="1"/>
        <end position="349"/>
    </location>
</feature>
<feature type="transmembrane region" description="Helical" evidence="1">
    <location>
        <begin position="350"/>
        <end position="370"/>
    </location>
</feature>
<feature type="topological domain" description="Extracellular" evidence="12">
    <location>
        <begin position="371"/>
        <end position="585"/>
    </location>
</feature>
<feature type="domain" description="Protein kinase" evidence="2">
    <location>
        <begin position="12"/>
        <end position="252"/>
    </location>
</feature>
<feature type="region of interest" description="Disordered" evidence="3">
    <location>
        <begin position="546"/>
        <end position="585"/>
    </location>
</feature>
<feature type="compositionally biased region" description="Low complexity" evidence="3">
    <location>
        <begin position="554"/>
        <end position="585"/>
    </location>
</feature>
<feature type="active site" description="Proton acceptor" evidence="2">
    <location>
        <position position="137"/>
    </location>
</feature>
<feature type="binding site" evidence="2">
    <location>
        <begin position="18"/>
        <end position="26"/>
    </location>
    <ligand>
        <name>ATP</name>
        <dbReference type="ChEBI" id="CHEBI:30616"/>
    </ligand>
</feature>
<feature type="binding site" evidence="9 13">
    <location>
        <position position="41"/>
    </location>
    <ligand>
        <name>ADP</name>
        <dbReference type="ChEBI" id="CHEBI:456216"/>
    </ligand>
</feature>
<feature type="binding site" evidence="2">
    <location>
        <position position="41"/>
    </location>
    <ligand>
        <name>ATP</name>
        <dbReference type="ChEBI" id="CHEBI:30616"/>
    </ligand>
</feature>
<feature type="binding site" evidence="9 13">
    <location>
        <position position="90"/>
    </location>
    <ligand>
        <name>ADP</name>
        <dbReference type="ChEBI" id="CHEBI:456216"/>
    </ligand>
</feature>
<feature type="binding site" evidence="9 13">
    <location>
        <position position="92"/>
    </location>
    <ligand>
        <name>ADP</name>
        <dbReference type="ChEBI" id="CHEBI:456216"/>
    </ligand>
</feature>
<feature type="mutagenesis site" description="Results in a conformational transition from dimer to monomer." evidence="10">
    <original>I</original>
    <variation>E</variation>
    <variation>K</variation>
    <variation>G</variation>
    <location>
        <position position="413"/>
    </location>
</feature>
<feature type="mutagenesis site" description="Favors the presence of monomers in solution." evidence="10">
    <original>P</original>
    <variation>G</variation>
    <location>
        <position position="430"/>
    </location>
</feature>
<feature type="mutagenesis site" description="Favors the presence of monomers in solution." evidence="10">
    <original>P</original>
    <variation>G</variation>
    <location>
        <position position="431"/>
    </location>
</feature>
<feature type="strand" evidence="20">
    <location>
        <begin position="12"/>
        <end position="21"/>
    </location>
</feature>
<feature type="strand" evidence="20">
    <location>
        <begin position="24"/>
        <end position="30"/>
    </location>
</feature>
<feature type="strand" evidence="20">
    <location>
        <begin position="34"/>
        <end position="36"/>
    </location>
</feature>
<feature type="strand" evidence="20">
    <location>
        <begin position="38"/>
        <end position="43"/>
    </location>
</feature>
<feature type="helix" evidence="20">
    <location>
        <begin position="45"/>
        <end position="49"/>
    </location>
</feature>
<feature type="helix" evidence="20">
    <location>
        <begin position="51"/>
        <end position="64"/>
    </location>
</feature>
<feature type="strand" evidence="20">
    <location>
        <begin position="75"/>
        <end position="81"/>
    </location>
</feature>
<feature type="strand" evidence="20">
    <location>
        <begin position="84"/>
        <end position="90"/>
    </location>
</feature>
<feature type="strand" evidence="20">
    <location>
        <begin position="94"/>
        <end position="96"/>
    </location>
</feature>
<feature type="helix" evidence="20">
    <location>
        <begin position="97"/>
        <end position="104"/>
    </location>
</feature>
<feature type="helix" evidence="20">
    <location>
        <begin position="111"/>
        <end position="130"/>
    </location>
</feature>
<feature type="helix" evidence="20">
    <location>
        <begin position="140"/>
        <end position="142"/>
    </location>
</feature>
<feature type="strand" evidence="20">
    <location>
        <begin position="143"/>
        <end position="146"/>
    </location>
</feature>
<feature type="strand" evidence="20">
    <location>
        <begin position="155"/>
        <end position="157"/>
    </location>
</feature>
<feature type="helix" evidence="20">
    <location>
        <begin position="171"/>
        <end position="175"/>
    </location>
</feature>
<feature type="helix" evidence="20">
    <location>
        <begin position="181"/>
        <end position="197"/>
    </location>
</feature>
<feature type="helix" evidence="20">
    <location>
        <begin position="215"/>
        <end position="218"/>
    </location>
</feature>
<feature type="helix" evidence="20">
    <location>
        <begin position="220"/>
        <end position="225"/>
    </location>
</feature>
<feature type="helix" evidence="20">
    <location>
        <begin position="226"/>
        <end position="232"/>
    </location>
</feature>
<feature type="helix" evidence="20">
    <location>
        <begin position="237"/>
        <end position="239"/>
    </location>
</feature>
<feature type="helix" evidence="20">
    <location>
        <begin position="244"/>
        <end position="255"/>
    </location>
</feature>
<feature type="helix" evidence="20">
    <location>
        <begin position="256"/>
        <end position="259"/>
    </location>
</feature>
<feature type="strand" evidence="22">
    <location>
        <begin position="409"/>
        <end position="415"/>
    </location>
</feature>
<feature type="helix" evidence="22">
    <location>
        <begin position="417"/>
        <end position="419"/>
    </location>
</feature>
<feature type="strand" evidence="22">
    <location>
        <begin position="433"/>
        <end position="443"/>
    </location>
</feature>
<feature type="strand" evidence="22">
    <location>
        <begin position="448"/>
        <end position="455"/>
    </location>
</feature>
<feature type="turn" evidence="21">
    <location>
        <begin position="465"/>
        <end position="467"/>
    </location>
</feature>
<feature type="strand" evidence="22">
    <location>
        <begin position="471"/>
        <end position="476"/>
    </location>
</feature>
<feature type="strand" evidence="22">
    <location>
        <begin position="479"/>
        <end position="482"/>
    </location>
</feature>
<feature type="strand" evidence="22">
    <location>
        <begin position="485"/>
        <end position="488"/>
    </location>
</feature>
<feature type="strand" evidence="22">
    <location>
        <begin position="502"/>
        <end position="511"/>
    </location>
</feature>
<feature type="strand" evidence="22">
    <location>
        <begin position="513"/>
        <end position="515"/>
    </location>
</feature>
<feature type="strand" evidence="22">
    <location>
        <begin position="517"/>
        <end position="525"/>
    </location>
</feature>
<feature type="strand" evidence="22">
    <location>
        <begin position="536"/>
        <end position="545"/>
    </location>
</feature>
<comment type="function">
    <text evidence="6 8">Plays an important role in slowing down the growth of mycobacteria within the infected host (PubMed:19341393). Activates the peroxidase activity of Rv2159c in a phosphorylation independent manner during oxidative stress conditions and thereby maintains the cellular homeostasis (PubMed:27818650).</text>
</comment>
<comment type="catalytic activity">
    <reaction evidence="4 5">
        <text>L-seryl-[protein] + ATP = O-phospho-L-seryl-[protein] + ADP + H(+)</text>
        <dbReference type="Rhea" id="RHEA:17989"/>
        <dbReference type="Rhea" id="RHEA-COMP:9863"/>
        <dbReference type="Rhea" id="RHEA-COMP:11604"/>
        <dbReference type="ChEBI" id="CHEBI:15378"/>
        <dbReference type="ChEBI" id="CHEBI:29999"/>
        <dbReference type="ChEBI" id="CHEBI:30616"/>
        <dbReference type="ChEBI" id="CHEBI:83421"/>
        <dbReference type="ChEBI" id="CHEBI:456216"/>
        <dbReference type="EC" id="2.7.11.1"/>
    </reaction>
</comment>
<comment type="catalytic activity">
    <reaction evidence="4 5">
        <text>L-threonyl-[protein] + ATP = O-phospho-L-threonyl-[protein] + ADP + H(+)</text>
        <dbReference type="Rhea" id="RHEA:46608"/>
        <dbReference type="Rhea" id="RHEA-COMP:11060"/>
        <dbReference type="Rhea" id="RHEA-COMP:11605"/>
        <dbReference type="ChEBI" id="CHEBI:15378"/>
        <dbReference type="ChEBI" id="CHEBI:30013"/>
        <dbReference type="ChEBI" id="CHEBI:30616"/>
        <dbReference type="ChEBI" id="CHEBI:61977"/>
        <dbReference type="ChEBI" id="CHEBI:456216"/>
        <dbReference type="EC" id="2.7.11.1"/>
    </reaction>
</comment>
<comment type="cofactor">
    <cofactor evidence="4">
        <name>Mn(2+)</name>
        <dbReference type="ChEBI" id="CHEBI:29035"/>
    </cofactor>
</comment>
<comment type="activity regulation">
    <text evidence="10">Dimerization of the C-terminal extracellular sensor domain activates kinase autophosphorylation activity.</text>
</comment>
<comment type="subunit">
    <text evidence="7 8 10">Probably functions as a dimer in the regulation of M.tuberculosis growth (PubMed:28712808). In the absence of stimuli, exists in a monomer-dimer equilibrium: a monomer form with no activity and a domain-swapped dimer form with a basic level of autophosphorylation activity (PubMed:28712808). The presence of stimuli results in a shift in the monomer-dimer equilibrium, leading to the formation of more dimeric PknI (PubMed:28712808). Specifically interacts with two peroxidase proteins, Rv2159c and Rv0148 (PubMed:26546727, PubMed:27818650). The PknI-Rv2159c interaction is mediated through phosphorylation independent physical interaction (PubMed:27818650).</text>
</comment>
<comment type="subcellular location">
    <subcellularLocation>
        <location evidence="5">Cytoplasm</location>
    </subcellularLocation>
    <subcellularLocation>
        <location evidence="5">Cell membrane</location>
        <topology evidence="5">Single-pass membrane protein</topology>
    </subcellularLocation>
    <text evidence="5">More abundant in the cytosol than in the cell membrane.</text>
</comment>
<comment type="induction">
    <text evidence="5">Expression decreases during infection of human macrophages.</text>
</comment>
<comment type="PTM">
    <text evidence="4 5 10">Autophosphorylated at serine and threonine residues.</text>
</comment>
<comment type="disruption phenotype">
    <text evidence="6">Mutants show increased growth within macrophages and a hypervirulence phenotype in severe combined immunodeficiency mice.</text>
</comment>
<comment type="miscellaneous">
    <text evidence="9">Several structural motifs known to be critical for the activity of eukaryotic-like Ser/Thr protein kinases (ePKs) are severely degraded in PknI (PubMed:28054744). No kinase activity was detected by Lisa et al. for the catalytic domain of PknI, against different substrates and in various experimental conditions, suggesting that PknI may rely on unconventional mechanism(s) for kinase activity and/or it could play alternative role(s) in mycobacterial signaling (PubMed:28054744).</text>
</comment>
<comment type="similarity">
    <text evidence="2">Belongs to the protein kinase superfamily. Ser/Thr protein kinase family.</text>
</comment>
<proteinExistence type="evidence at protein level"/>
<protein>
    <recommendedName>
        <fullName evidence="11">Serine/threonine-protein kinase PknI</fullName>
        <ecNumber evidence="4 5">2.7.11.1</ecNumber>
    </recommendedName>
</protein>
<gene>
    <name type="primary">pknI</name>
    <name type="ordered locus">Rv2914c</name>
    <name type="ORF">MTCY338.02c</name>
</gene>
<accession>P9WI69</accession>
<accession>L0TB90</accession>
<accession>P65730</accession>
<accession>Q10964</accession>
<keyword id="KW-0002">3D-structure</keyword>
<keyword id="KW-0067">ATP-binding</keyword>
<keyword id="KW-1003">Cell membrane</keyword>
<keyword id="KW-0963">Cytoplasm</keyword>
<keyword id="KW-0418">Kinase</keyword>
<keyword id="KW-0472">Membrane</keyword>
<keyword id="KW-0547">Nucleotide-binding</keyword>
<keyword id="KW-1185">Reference proteome</keyword>
<keyword id="KW-0723">Serine/threonine-protein kinase</keyword>
<keyword id="KW-0808">Transferase</keyword>
<keyword id="KW-0812">Transmembrane</keyword>
<keyword id="KW-1133">Transmembrane helix</keyword>
<keyword id="KW-0843">Virulence</keyword>